<sequence>MASKTRRGSSLAKKEKEIKKEIEEDKEVAPIQEEDDDGPPPILEREASCGENDDTDGDGKEEDAQKEDDIDGSKTKNESILEALSQFFTADDATVKNRRNSPPSESSSTRNTLGLNRGGAIPKALLLNKNLRPVPSKTPPIATTRFASLRHLSSAPGTSASTSGSPSVGIRKYGVPPPMPRSLRNIAGSINVVGSNSSLGPARLLESRKRHFDKDKDGKNPKRSSLVAYNGGRAGENFRKVPPSAVSPAPGSGSSASSGTSTSSSNGIIDVQSMLRDQSPVRMQVMVGGDHETNGDSIQEAMELANAQKESIGNIARASSHHNMLLGSMIINGLNTLQSRDKDEYTNFSSDLFSLITRYNIN</sequence>
<gene>
    <name type="ORF">F10E9.3</name>
</gene>
<keyword id="KW-1185">Reference proteome</keyword>
<dbReference type="EMBL" id="FO081105">
    <property type="protein sequence ID" value="CCD69130.1"/>
    <property type="molecule type" value="Genomic_DNA"/>
</dbReference>
<dbReference type="PIR" id="S44802">
    <property type="entry name" value="S44802"/>
</dbReference>
<dbReference type="RefSeq" id="NP_498826.2">
    <property type="nucleotide sequence ID" value="NM_066425.5"/>
</dbReference>
<dbReference type="BioGRID" id="41374">
    <property type="interactions" value="15"/>
</dbReference>
<dbReference type="DIP" id="DIP-26529N"/>
<dbReference type="FunCoup" id="P34397">
    <property type="interactions" value="1561"/>
</dbReference>
<dbReference type="IntAct" id="P34397">
    <property type="interactions" value="12"/>
</dbReference>
<dbReference type="MINT" id="P34397"/>
<dbReference type="STRING" id="6239.F10E9.3.1"/>
<dbReference type="PaxDb" id="6239-F10E9.3"/>
<dbReference type="PeptideAtlas" id="P34397"/>
<dbReference type="EnsemblMetazoa" id="F10E9.3.1">
    <property type="protein sequence ID" value="F10E9.3.1"/>
    <property type="gene ID" value="WBGene00017355"/>
</dbReference>
<dbReference type="GeneID" id="176170"/>
<dbReference type="KEGG" id="cel:CELE_F10E9.3"/>
<dbReference type="UCSC" id="F10E9.3.1">
    <property type="organism name" value="c. elegans"/>
</dbReference>
<dbReference type="AGR" id="WB:WBGene00017355"/>
<dbReference type="CTD" id="176170"/>
<dbReference type="WormBase" id="F10E9.3">
    <property type="protein sequence ID" value="CE29959"/>
    <property type="gene ID" value="WBGene00017355"/>
</dbReference>
<dbReference type="eggNOG" id="ENOG502TGHI">
    <property type="taxonomic scope" value="Eukaryota"/>
</dbReference>
<dbReference type="HOGENOM" id="CLU_066503_0_0_1"/>
<dbReference type="InParanoid" id="P34397"/>
<dbReference type="OMA" id="PVRMQVS"/>
<dbReference type="OrthoDB" id="5872667at2759"/>
<dbReference type="PRO" id="PR:P34397"/>
<dbReference type="Proteomes" id="UP000001940">
    <property type="component" value="Chromosome III"/>
</dbReference>
<dbReference type="Bgee" id="WBGene00017355">
    <property type="expression patterns" value="Expressed in germ line (C elegans) and 4 other cell types or tissues"/>
</dbReference>
<dbReference type="InterPro" id="IPR040437">
    <property type="entry name" value="F10E9.3-like"/>
</dbReference>
<dbReference type="PANTHER" id="PTHR36953">
    <property type="entry name" value="PROTEIN CBG07386-RELATED"/>
    <property type="match status" value="1"/>
</dbReference>
<dbReference type="PANTHER" id="PTHR36953:SF2">
    <property type="entry name" value="PROTEIN CBG16638"/>
    <property type="match status" value="1"/>
</dbReference>
<protein>
    <recommendedName>
        <fullName>Uncharacterized protein F10E9.3</fullName>
    </recommendedName>
</protein>
<feature type="chain" id="PRO_0000065287" description="Uncharacterized protein F10E9.3">
    <location>
        <begin position="1"/>
        <end position="362"/>
    </location>
</feature>
<feature type="region of interest" description="Disordered" evidence="1">
    <location>
        <begin position="1"/>
        <end position="117"/>
    </location>
</feature>
<feature type="region of interest" description="Disordered" evidence="1">
    <location>
        <begin position="153"/>
        <end position="172"/>
    </location>
</feature>
<feature type="region of interest" description="Disordered" evidence="1">
    <location>
        <begin position="210"/>
        <end position="266"/>
    </location>
</feature>
<feature type="compositionally biased region" description="Basic and acidic residues" evidence="1">
    <location>
        <begin position="12"/>
        <end position="23"/>
    </location>
</feature>
<feature type="compositionally biased region" description="Acidic residues" evidence="1">
    <location>
        <begin position="51"/>
        <end position="70"/>
    </location>
</feature>
<feature type="compositionally biased region" description="Low complexity" evidence="1">
    <location>
        <begin position="100"/>
        <end position="112"/>
    </location>
</feature>
<feature type="compositionally biased region" description="Low complexity" evidence="1">
    <location>
        <begin position="153"/>
        <end position="167"/>
    </location>
</feature>
<feature type="compositionally biased region" description="Low complexity" evidence="1">
    <location>
        <begin position="241"/>
        <end position="265"/>
    </location>
</feature>
<proteinExistence type="predicted"/>
<reference key="1">
    <citation type="journal article" date="1994" name="Nature">
        <title>2.2 Mb of contiguous nucleotide sequence from chromosome III of C. elegans.</title>
        <authorList>
            <person name="Wilson R."/>
            <person name="Ainscough R."/>
            <person name="Anderson K."/>
            <person name="Baynes C."/>
            <person name="Berks M."/>
            <person name="Bonfield J."/>
            <person name="Burton J."/>
            <person name="Connell M."/>
            <person name="Copsey T."/>
            <person name="Cooper J."/>
            <person name="Coulson A."/>
            <person name="Craxton M."/>
            <person name="Dear S."/>
            <person name="Du Z."/>
            <person name="Durbin R."/>
            <person name="Favello A."/>
            <person name="Fraser A."/>
            <person name="Fulton L."/>
            <person name="Gardner A."/>
            <person name="Green P."/>
            <person name="Hawkins T."/>
            <person name="Hillier L."/>
            <person name="Jier M."/>
            <person name="Johnston L."/>
            <person name="Jones M."/>
            <person name="Kershaw J."/>
            <person name="Kirsten J."/>
            <person name="Laisster N."/>
            <person name="Latreille P."/>
            <person name="Lightning J."/>
            <person name="Lloyd C."/>
            <person name="Mortimore B."/>
            <person name="O'Callaghan M."/>
            <person name="Parsons J."/>
            <person name="Percy C."/>
            <person name="Rifken L."/>
            <person name="Roopra A."/>
            <person name="Saunders D."/>
            <person name="Shownkeen R."/>
            <person name="Sims M."/>
            <person name="Smaldon N."/>
            <person name="Smith A."/>
            <person name="Smith M."/>
            <person name="Sonnhammer E."/>
            <person name="Staden R."/>
            <person name="Sulston J."/>
            <person name="Thierry-Mieg J."/>
            <person name="Thomas K."/>
            <person name="Vaudin M."/>
            <person name="Vaughan K."/>
            <person name="Waterston R."/>
            <person name="Watson A."/>
            <person name="Weinstock L."/>
            <person name="Wilkinson-Sproat J."/>
            <person name="Wohldman P."/>
        </authorList>
    </citation>
    <scope>NUCLEOTIDE SEQUENCE [LARGE SCALE GENOMIC DNA]</scope>
    <source>
        <strain>Bristol N2</strain>
    </source>
</reference>
<reference key="2">
    <citation type="journal article" date="1998" name="Science">
        <title>Genome sequence of the nematode C. elegans: a platform for investigating biology.</title>
        <authorList>
            <consortium name="The C. elegans sequencing consortium"/>
        </authorList>
    </citation>
    <scope>NUCLEOTIDE SEQUENCE [LARGE SCALE GENOMIC DNA]</scope>
    <source>
        <strain>Bristol N2</strain>
    </source>
</reference>
<name>YLU3_CAEEL</name>
<evidence type="ECO:0000256" key="1">
    <source>
        <dbReference type="SAM" id="MobiDB-lite"/>
    </source>
</evidence>
<accession>P34397</accession>
<organism>
    <name type="scientific">Caenorhabditis elegans</name>
    <dbReference type="NCBI Taxonomy" id="6239"/>
    <lineage>
        <taxon>Eukaryota</taxon>
        <taxon>Metazoa</taxon>
        <taxon>Ecdysozoa</taxon>
        <taxon>Nematoda</taxon>
        <taxon>Chromadorea</taxon>
        <taxon>Rhabditida</taxon>
        <taxon>Rhabditina</taxon>
        <taxon>Rhabditomorpha</taxon>
        <taxon>Rhabditoidea</taxon>
        <taxon>Rhabditidae</taxon>
        <taxon>Peloderinae</taxon>
        <taxon>Caenorhabditis</taxon>
    </lineage>
</organism>